<reference evidence="6" key="1">
    <citation type="journal article" date="2010" name="Peptides">
        <title>CAPA-peptides of praying mantids (Mantodea).</title>
        <authorList>
            <person name="Koehler R."/>
            <person name="Predel R."/>
        </authorList>
    </citation>
    <scope>PROTEIN SEQUENCE</scope>
    <scope>MASS SPECTROMETRY</scope>
    <scope>PYROGLUTAMATE FORMATION AT GLN-1</scope>
    <scope>AMIDATION AT VAL-9</scope>
    <source>
        <tissue evidence="4">Abdominal perisympathetic organs</tissue>
    </source>
</reference>
<organism>
    <name type="scientific">Episcopomantis chalybea</name>
    <name type="common">Double-coned grass mantid</name>
    <name type="synonym">Schizocephala chalybea</name>
    <dbReference type="NCBI Taxonomy" id="267161"/>
    <lineage>
        <taxon>Eukaryota</taxon>
        <taxon>Metazoa</taxon>
        <taxon>Ecdysozoa</taxon>
        <taxon>Arthropoda</taxon>
        <taxon>Hexapoda</taxon>
        <taxon>Insecta</taxon>
        <taxon>Pterygota</taxon>
        <taxon>Neoptera</taxon>
        <taxon>Polyneoptera</taxon>
        <taxon>Dictyoptera</taxon>
        <taxon>Mantodea</taxon>
        <taxon>Eumantodea</taxon>
        <taxon>Eremiaphiloidea</taxon>
        <taxon>Eremiaphilidae</taxon>
        <taxon>Tarachodinae</taxon>
        <taxon>Episcopomantis</taxon>
    </lineage>
</organism>
<dbReference type="GO" id="GO:0005576">
    <property type="term" value="C:extracellular region"/>
    <property type="evidence" value="ECO:0007669"/>
    <property type="project" value="UniProtKB-SubCell"/>
</dbReference>
<dbReference type="GO" id="GO:0007218">
    <property type="term" value="P:neuropeptide signaling pathway"/>
    <property type="evidence" value="ECO:0007669"/>
    <property type="project" value="UniProtKB-KW"/>
</dbReference>
<dbReference type="InterPro" id="IPR013231">
    <property type="entry name" value="Periviscerokinin"/>
</dbReference>
<dbReference type="Pfam" id="PF08259">
    <property type="entry name" value="Periviscerokin"/>
    <property type="match status" value="1"/>
</dbReference>
<feature type="peptide" id="PRO_0000395567" description="Periviscerokinin-1" evidence="4">
    <location>
        <begin position="1"/>
        <end position="9"/>
    </location>
</feature>
<feature type="modified residue" description="Pyrrolidone carboxylic acid; partial" evidence="4">
    <location>
        <position position="1"/>
    </location>
</feature>
<feature type="modified residue" description="Valine amide" evidence="4">
    <location>
        <position position="9"/>
    </location>
</feature>
<feature type="unsure residue" description="L or I" evidence="4">
    <location>
        <position position="3"/>
    </location>
</feature>
<feature type="unsure residue" description="I or L" evidence="4">
    <location>
        <position position="4"/>
    </location>
</feature>
<protein>
    <recommendedName>
        <fullName evidence="5">Periviscerokinin-1</fullName>
    </recommendedName>
</protein>
<proteinExistence type="evidence at protein level"/>
<sequence>QGLIPFPRV</sequence>
<keyword id="KW-0027">Amidation</keyword>
<keyword id="KW-0903">Direct protein sequencing</keyword>
<keyword id="KW-0527">Neuropeptide</keyword>
<keyword id="KW-0873">Pyrrolidone carboxylic acid</keyword>
<keyword id="KW-0964">Secreted</keyword>
<comment type="function">
    <text evidence="1">Mediates visceral muscle contractile activity (myotropic activity).</text>
</comment>
<comment type="subcellular location">
    <subcellularLocation>
        <location evidence="2">Secreted</location>
    </subcellularLocation>
</comment>
<comment type="mass spectrometry"/>
<comment type="mass spectrometry">
    <text>With pyroglutamate at Gln-1.</text>
</comment>
<comment type="similarity">
    <text evidence="3">Belongs to the periviscerokinin family.</text>
</comment>
<name>PVK1_EPICH</name>
<evidence type="ECO:0000250" key="1">
    <source>
        <dbReference type="UniProtKB" id="P83923"/>
    </source>
</evidence>
<evidence type="ECO:0000250" key="2">
    <source>
        <dbReference type="UniProtKB" id="P84375"/>
    </source>
</evidence>
<evidence type="ECO:0000255" key="3"/>
<evidence type="ECO:0000269" key="4">
    <source>
    </source>
</evidence>
<evidence type="ECO:0000303" key="5">
    <source>
    </source>
</evidence>
<evidence type="ECO:0000305" key="6"/>
<accession>P86651</accession>